<evidence type="ECO:0000255" key="1">
    <source>
        <dbReference type="PROSITE-ProRule" id="PRU00042"/>
    </source>
</evidence>
<evidence type="ECO:0000255" key="2">
    <source>
        <dbReference type="PROSITE-ProRule" id="PRU00119"/>
    </source>
</evidence>
<evidence type="ECO:0000269" key="3">
    <source>
    </source>
</evidence>
<evidence type="ECO:0000305" key="4"/>
<gene>
    <name type="primary">ZNF10</name>
    <name type="synonym">KOX1</name>
</gene>
<comment type="function">
    <text>May be involved in transcriptional regulation.</text>
</comment>
<comment type="subunit">
    <text evidence="3">Interacts (via the KRAB domain) with TRIM28 (via the RBCC domain).</text>
</comment>
<comment type="interaction">
    <interactant intactId="EBI-1105324">
        <id>P21506</id>
    </interactant>
    <interactant intactId="EBI-3866279">
        <id>Q9BWT7</id>
        <label>CARD10</label>
    </interactant>
    <organismsDiffer>false</organismsDiffer>
    <experiments>3</experiments>
</comment>
<comment type="interaction">
    <interactant intactId="EBI-1105324">
        <id>P21506</id>
    </interactant>
    <interactant intactId="EBI-78139">
        <id>Q13263</id>
        <label>TRIM28</label>
    </interactant>
    <organismsDiffer>false</organismsDiffer>
    <experiments>3</experiments>
</comment>
<comment type="subcellular location">
    <subcellularLocation>
        <location evidence="3">Nucleus</location>
    </subcellularLocation>
</comment>
<comment type="similarity">
    <text evidence="4">Belongs to the krueppel C2H2-type zinc-finger protein family.</text>
</comment>
<organism>
    <name type="scientific">Homo sapiens</name>
    <name type="common">Human</name>
    <dbReference type="NCBI Taxonomy" id="9606"/>
    <lineage>
        <taxon>Eukaryota</taxon>
        <taxon>Metazoa</taxon>
        <taxon>Chordata</taxon>
        <taxon>Craniata</taxon>
        <taxon>Vertebrata</taxon>
        <taxon>Euteleostomi</taxon>
        <taxon>Mammalia</taxon>
        <taxon>Eutheria</taxon>
        <taxon>Euarchontoglires</taxon>
        <taxon>Primates</taxon>
        <taxon>Haplorrhini</taxon>
        <taxon>Catarrhini</taxon>
        <taxon>Hominidae</taxon>
        <taxon>Homo</taxon>
    </lineage>
</organism>
<proteinExistence type="evidence at protein level"/>
<protein>
    <recommendedName>
        <fullName>Zinc finger protein 10</fullName>
    </recommendedName>
    <alternativeName>
        <fullName>Zinc finger protein KOX1</fullName>
    </alternativeName>
</protein>
<sequence length="573" mass="66455">MDAKSLTAWSRTLVTFKDVFVDFTREEWKLLDTAQQIVYRNVMLENYKNLVSLGYQLTKPDVILRLEKGEEPWLVEREIHQETHPDSETAFEIKSSVSSRSIFKDKQSCDIKMEGMARNDLWYLSLEEVWKCRDQLDKYQENPERHLRQVAFTQKKVLTQERVSESGKYGGNCLLPAQLVLREYFHKRDSHTKSLKHDLVLNGHQDSCASNSNECGQTFCQNIHLIQFARTHTGDKSYKCPDNDNSLTHGSSLGISKGIHREKPYECKECGKFFSWRSNLTRHQLIHTGEKPYECKECGKSFSRSSHLIGHQKTHTGEEPYECKECGKSFSWFSHLVTHQRTHTGDKLYTCNQCGKSFVHSSRLIRHQRTHTGEKPYECPECGKSFRQSTHLILHQRTHVRVRPYECNECGKSYSQRSHLVVHHRIHTGLKPFECKDCGKCFSRSSHLYSHQRTHTGEKPYECHDCGKSFSQSSALIVHQRIHTGEKPYECCQCGKAFIRKNDLIKHQRIHVGEETYKCNQCGIIFSQNSPFIVHQIAHTGEQFLTCNQCGTALVNTSNLIGYQTNHIRENAY</sequence>
<keyword id="KW-0238">DNA-binding</keyword>
<keyword id="KW-0479">Metal-binding</keyword>
<keyword id="KW-0539">Nucleus</keyword>
<keyword id="KW-1267">Proteomics identification</keyword>
<keyword id="KW-1185">Reference proteome</keyword>
<keyword id="KW-0677">Repeat</keyword>
<keyword id="KW-0804">Transcription</keyword>
<keyword id="KW-0805">Transcription regulation</keyword>
<keyword id="KW-0862">Zinc</keyword>
<keyword id="KW-0863">Zinc-finger</keyword>
<dbReference type="EMBL" id="X52332">
    <property type="protein sequence ID" value="CAA36558.1"/>
    <property type="molecule type" value="mRNA"/>
</dbReference>
<dbReference type="EMBL" id="AK314784">
    <property type="protein sequence ID" value="BAG37318.1"/>
    <property type="molecule type" value="mRNA"/>
</dbReference>
<dbReference type="EMBL" id="CH471218">
    <property type="protein sequence ID" value="EAW54791.1"/>
    <property type="molecule type" value="Genomic_DNA"/>
</dbReference>
<dbReference type="EMBL" id="BC024182">
    <property type="protein sequence ID" value="AAH24182.1"/>
    <property type="molecule type" value="mRNA"/>
</dbReference>
<dbReference type="CCDS" id="CCDS9283.1"/>
<dbReference type="PIR" id="S10397">
    <property type="entry name" value="S10397"/>
</dbReference>
<dbReference type="RefSeq" id="NP_056209.2">
    <property type="nucleotide sequence ID" value="NM_015394.4"/>
</dbReference>
<dbReference type="SMR" id="P21506"/>
<dbReference type="BioGRID" id="113388">
    <property type="interactions" value="15"/>
</dbReference>
<dbReference type="FunCoup" id="P21506">
    <property type="interactions" value="344"/>
</dbReference>
<dbReference type="IntAct" id="P21506">
    <property type="interactions" value="11"/>
</dbReference>
<dbReference type="STRING" id="9606.ENSP00000248211"/>
<dbReference type="GlyGen" id="P21506">
    <property type="glycosylation" value="1 site, 1 O-linked glycan (1 site)"/>
</dbReference>
<dbReference type="iPTMnet" id="P21506"/>
<dbReference type="PhosphoSitePlus" id="P21506"/>
<dbReference type="BioMuta" id="ZNF10"/>
<dbReference type="DMDM" id="55977778"/>
<dbReference type="jPOST" id="P21506"/>
<dbReference type="MassIVE" id="P21506"/>
<dbReference type="PaxDb" id="9606-ENSP00000248211"/>
<dbReference type="PeptideAtlas" id="P21506"/>
<dbReference type="ProteomicsDB" id="53873"/>
<dbReference type="Antibodypedia" id="53315">
    <property type="antibodies" value="156 antibodies from 20 providers"/>
</dbReference>
<dbReference type="DNASU" id="7556"/>
<dbReference type="Ensembl" id="ENST00000248211.11">
    <property type="protein sequence ID" value="ENSP00000248211.6"/>
    <property type="gene ID" value="ENSG00000256223.6"/>
</dbReference>
<dbReference type="Ensembl" id="ENST00000426665.6">
    <property type="protein sequence ID" value="ENSP00000393814.2"/>
    <property type="gene ID" value="ENSG00000256223.6"/>
</dbReference>
<dbReference type="GeneID" id="7556"/>
<dbReference type="KEGG" id="hsa:7556"/>
<dbReference type="MANE-Select" id="ENST00000248211.11">
    <property type="protein sequence ID" value="ENSP00000248211.6"/>
    <property type="RefSeq nucleotide sequence ID" value="NM_015394.5"/>
    <property type="RefSeq protein sequence ID" value="NP_056209.2"/>
</dbReference>
<dbReference type="UCSC" id="uc001ulq.4">
    <property type="organism name" value="human"/>
</dbReference>
<dbReference type="AGR" id="HGNC:12879"/>
<dbReference type="CTD" id="7556"/>
<dbReference type="DisGeNET" id="7556"/>
<dbReference type="GeneCards" id="ZNF10"/>
<dbReference type="HGNC" id="HGNC:12879">
    <property type="gene designation" value="ZNF10"/>
</dbReference>
<dbReference type="HPA" id="ENSG00000256223">
    <property type="expression patterns" value="Low tissue specificity"/>
</dbReference>
<dbReference type="MIM" id="194538">
    <property type="type" value="gene"/>
</dbReference>
<dbReference type="neXtProt" id="NX_P21506"/>
<dbReference type="OpenTargets" id="ENSG00000256223"/>
<dbReference type="PharmGKB" id="PA37468"/>
<dbReference type="VEuPathDB" id="HostDB:ENSG00000256223"/>
<dbReference type="eggNOG" id="KOG1721">
    <property type="taxonomic scope" value="Eukaryota"/>
</dbReference>
<dbReference type="GeneTree" id="ENSGT00940000162949"/>
<dbReference type="HOGENOM" id="CLU_002678_44_5_1"/>
<dbReference type="InParanoid" id="P21506"/>
<dbReference type="OMA" id="GEQFFTC"/>
<dbReference type="OrthoDB" id="9819492at2759"/>
<dbReference type="PAN-GO" id="P21506">
    <property type="GO annotations" value="3 GO annotations based on evolutionary models"/>
</dbReference>
<dbReference type="PhylomeDB" id="P21506"/>
<dbReference type="TreeFam" id="TF337898"/>
<dbReference type="PathwayCommons" id="P21506"/>
<dbReference type="Reactome" id="R-HSA-212436">
    <property type="pathway name" value="Generic Transcription Pathway"/>
</dbReference>
<dbReference type="SignaLink" id="P21506"/>
<dbReference type="BioGRID-ORCS" id="7556">
    <property type="hits" value="8 hits in 1160 CRISPR screens"/>
</dbReference>
<dbReference type="ChiTaRS" id="ZNF10">
    <property type="organism name" value="human"/>
</dbReference>
<dbReference type="GeneWiki" id="ZNF10"/>
<dbReference type="GenomeRNAi" id="7556"/>
<dbReference type="Pharos" id="P21506">
    <property type="development level" value="Tbio"/>
</dbReference>
<dbReference type="PRO" id="PR:P21506"/>
<dbReference type="Proteomes" id="UP000005640">
    <property type="component" value="Chromosome 12"/>
</dbReference>
<dbReference type="RNAct" id="P21506">
    <property type="molecule type" value="protein"/>
</dbReference>
<dbReference type="Bgee" id="ENSG00000256223">
    <property type="expression patterns" value="Expressed in adenohypophysis and 157 other cell types or tissues"/>
</dbReference>
<dbReference type="ExpressionAtlas" id="P21506">
    <property type="expression patterns" value="baseline and differential"/>
</dbReference>
<dbReference type="GO" id="GO:0005634">
    <property type="term" value="C:nucleus"/>
    <property type="evidence" value="ECO:0000314"/>
    <property type="project" value="UniProtKB"/>
</dbReference>
<dbReference type="GO" id="GO:0032991">
    <property type="term" value="C:protein-containing complex"/>
    <property type="evidence" value="ECO:0000314"/>
    <property type="project" value="UniProtKB"/>
</dbReference>
<dbReference type="GO" id="GO:0000981">
    <property type="term" value="F:DNA-binding transcription factor activity, RNA polymerase II-specific"/>
    <property type="evidence" value="ECO:0000318"/>
    <property type="project" value="GO_Central"/>
</dbReference>
<dbReference type="GO" id="GO:0000977">
    <property type="term" value="F:RNA polymerase II transcription regulatory region sequence-specific DNA binding"/>
    <property type="evidence" value="ECO:0000318"/>
    <property type="project" value="GO_Central"/>
</dbReference>
<dbReference type="GO" id="GO:0008270">
    <property type="term" value="F:zinc ion binding"/>
    <property type="evidence" value="ECO:0007669"/>
    <property type="project" value="UniProtKB-KW"/>
</dbReference>
<dbReference type="GO" id="GO:0006357">
    <property type="term" value="P:regulation of transcription by RNA polymerase II"/>
    <property type="evidence" value="ECO:0000318"/>
    <property type="project" value="GO_Central"/>
</dbReference>
<dbReference type="CDD" id="cd07765">
    <property type="entry name" value="KRAB_A-box"/>
    <property type="match status" value="1"/>
</dbReference>
<dbReference type="FunFam" id="3.30.160.60:FF:000008">
    <property type="entry name" value="RB-associated KRAB zinc finger protein-like"/>
    <property type="match status" value="1"/>
</dbReference>
<dbReference type="FunFam" id="3.30.160.60:FF:000218">
    <property type="entry name" value="Zinc finger protein 10"/>
    <property type="match status" value="1"/>
</dbReference>
<dbReference type="FunFam" id="3.30.160.60:FF:000596">
    <property type="entry name" value="zinc finger protein 10 isoform X1"/>
    <property type="match status" value="1"/>
</dbReference>
<dbReference type="FunFam" id="3.30.160.60:FF:001494">
    <property type="entry name" value="zinc finger protein 10 isoform X2"/>
    <property type="match status" value="1"/>
</dbReference>
<dbReference type="FunFam" id="3.30.160.60:FF:000024">
    <property type="entry name" value="zinc finger protein 140 isoform X1"/>
    <property type="match status" value="1"/>
</dbReference>
<dbReference type="FunFam" id="3.30.160.60:FF:000732">
    <property type="entry name" value="zinc finger protein 140 isoform X3"/>
    <property type="match status" value="1"/>
</dbReference>
<dbReference type="FunFam" id="3.30.160.60:FF:002343">
    <property type="entry name" value="Zinc finger protein 33A"/>
    <property type="match status" value="1"/>
</dbReference>
<dbReference type="FunFam" id="3.30.160.60:FF:001498">
    <property type="entry name" value="Zinc finger protein 404"/>
    <property type="match status" value="1"/>
</dbReference>
<dbReference type="FunFam" id="3.30.160.60:FF:001697">
    <property type="entry name" value="zinc finger protein 623"/>
    <property type="match status" value="1"/>
</dbReference>
<dbReference type="FunFam" id="3.30.160.60:FF:000953">
    <property type="entry name" value="Zinc finger protein 691"/>
    <property type="match status" value="1"/>
</dbReference>
<dbReference type="Gene3D" id="6.10.140.140">
    <property type="match status" value="1"/>
</dbReference>
<dbReference type="Gene3D" id="3.30.160.60">
    <property type="entry name" value="Classic Zinc Finger"/>
    <property type="match status" value="11"/>
</dbReference>
<dbReference type="InterPro" id="IPR001909">
    <property type="entry name" value="KRAB"/>
</dbReference>
<dbReference type="InterPro" id="IPR036051">
    <property type="entry name" value="KRAB_dom_sf"/>
</dbReference>
<dbReference type="InterPro" id="IPR036236">
    <property type="entry name" value="Znf_C2H2_sf"/>
</dbReference>
<dbReference type="InterPro" id="IPR013087">
    <property type="entry name" value="Znf_C2H2_type"/>
</dbReference>
<dbReference type="PANTHER" id="PTHR24394">
    <property type="entry name" value="ZINC FINGER PROTEIN"/>
    <property type="match status" value="1"/>
</dbReference>
<dbReference type="PANTHER" id="PTHR24394:SF48">
    <property type="entry name" value="ZINC FINGER PROTEIN 771"/>
    <property type="match status" value="1"/>
</dbReference>
<dbReference type="Pfam" id="PF01352">
    <property type="entry name" value="KRAB"/>
    <property type="match status" value="1"/>
</dbReference>
<dbReference type="Pfam" id="PF00096">
    <property type="entry name" value="zf-C2H2"/>
    <property type="match status" value="8"/>
</dbReference>
<dbReference type="Pfam" id="PF13465">
    <property type="entry name" value="zf-H2C2_2"/>
    <property type="match status" value="1"/>
</dbReference>
<dbReference type="SMART" id="SM00349">
    <property type="entry name" value="KRAB"/>
    <property type="match status" value="1"/>
</dbReference>
<dbReference type="SMART" id="SM00355">
    <property type="entry name" value="ZnF_C2H2"/>
    <property type="match status" value="10"/>
</dbReference>
<dbReference type="SUPFAM" id="SSF57667">
    <property type="entry name" value="beta-beta-alpha zinc fingers"/>
    <property type="match status" value="7"/>
</dbReference>
<dbReference type="SUPFAM" id="SSF109640">
    <property type="entry name" value="KRAB domain (Kruppel-associated box)"/>
    <property type="match status" value="1"/>
</dbReference>
<dbReference type="PROSITE" id="PS50805">
    <property type="entry name" value="KRAB"/>
    <property type="match status" value="1"/>
</dbReference>
<dbReference type="PROSITE" id="PS00028">
    <property type="entry name" value="ZINC_FINGER_C2H2_1"/>
    <property type="match status" value="10"/>
</dbReference>
<dbReference type="PROSITE" id="PS50157">
    <property type="entry name" value="ZINC_FINGER_C2H2_2"/>
    <property type="match status" value="11"/>
</dbReference>
<accession>P21506</accession>
<accession>B2RBS1</accession>
<accession>Q8TC91</accession>
<name>ZNF10_HUMAN</name>
<feature type="chain" id="PRO_0000047332" description="Zinc finger protein 10">
    <location>
        <begin position="1"/>
        <end position="573"/>
    </location>
</feature>
<feature type="domain" description="KRAB" evidence="2">
    <location>
        <begin position="14"/>
        <end position="85"/>
    </location>
</feature>
<feature type="zinc finger region" description="C2H2-type 1; atypical" evidence="1">
    <location>
        <begin position="206"/>
        <end position="232"/>
    </location>
</feature>
<feature type="zinc finger region" description="C2H2-type 2" evidence="1">
    <location>
        <begin position="265"/>
        <end position="287"/>
    </location>
</feature>
<feature type="zinc finger region" description="C2H2-type 3" evidence="1">
    <location>
        <begin position="293"/>
        <end position="315"/>
    </location>
</feature>
<feature type="zinc finger region" description="C2H2-type 4" evidence="1">
    <location>
        <begin position="321"/>
        <end position="343"/>
    </location>
</feature>
<feature type="zinc finger region" description="C2H2-type 5" evidence="1">
    <location>
        <begin position="349"/>
        <end position="371"/>
    </location>
</feature>
<feature type="zinc finger region" description="C2H2-type 6" evidence="1">
    <location>
        <begin position="377"/>
        <end position="399"/>
    </location>
</feature>
<feature type="zinc finger region" description="C2H2-type 7" evidence="1">
    <location>
        <begin position="405"/>
        <end position="427"/>
    </location>
</feature>
<feature type="zinc finger region" description="C2H2-type 8" evidence="1">
    <location>
        <begin position="433"/>
        <end position="455"/>
    </location>
</feature>
<feature type="zinc finger region" description="C2H2-type 9" evidence="1">
    <location>
        <begin position="461"/>
        <end position="483"/>
    </location>
</feature>
<feature type="zinc finger region" description="C2H2-type 10" evidence="1">
    <location>
        <begin position="489"/>
        <end position="511"/>
    </location>
</feature>
<feature type="zinc finger region" description="C2H2-type 11; atypical" evidence="1">
    <location>
        <begin position="517"/>
        <end position="539"/>
    </location>
</feature>
<feature type="sequence variant" id="VAR_052746" description="In dbSNP:rs11147259.">
    <original>Q</original>
    <variation>R</variation>
    <location>
        <position position="227"/>
    </location>
</feature>
<feature type="sequence conflict" description="In Ref. 1." evidence="4" ref="1">
    <location>
        <begin position="149"/>
        <end position="282"/>
    </location>
</feature>
<feature type="sequence conflict" description="In Ref. 1; CAA36558." evidence="4" ref="1">
    <original>E</original>
    <variation>H</variation>
    <location>
        <position position="374"/>
    </location>
</feature>
<feature type="sequence conflict" description="In Ref. 1; CAA36558." evidence="4" ref="1">
    <original>E</original>
    <variation>A</variation>
    <location>
        <position position="514"/>
    </location>
</feature>
<reference key="1">
    <citation type="journal article" date="1990" name="New Biol.">
        <title>Multiple genes encoding zinc finger domains are expressed in human T cells.</title>
        <authorList>
            <person name="Thiesen H.-J."/>
        </authorList>
    </citation>
    <scope>NUCLEOTIDE SEQUENCE [MRNA]</scope>
</reference>
<reference key="2">
    <citation type="journal article" date="2004" name="Nat. Genet.">
        <title>Complete sequencing and characterization of 21,243 full-length human cDNAs.</title>
        <authorList>
            <person name="Ota T."/>
            <person name="Suzuki Y."/>
            <person name="Nishikawa T."/>
            <person name="Otsuki T."/>
            <person name="Sugiyama T."/>
            <person name="Irie R."/>
            <person name="Wakamatsu A."/>
            <person name="Hayashi K."/>
            <person name="Sato H."/>
            <person name="Nagai K."/>
            <person name="Kimura K."/>
            <person name="Makita H."/>
            <person name="Sekine M."/>
            <person name="Obayashi M."/>
            <person name="Nishi T."/>
            <person name="Shibahara T."/>
            <person name="Tanaka T."/>
            <person name="Ishii S."/>
            <person name="Yamamoto J."/>
            <person name="Saito K."/>
            <person name="Kawai Y."/>
            <person name="Isono Y."/>
            <person name="Nakamura Y."/>
            <person name="Nagahari K."/>
            <person name="Murakami K."/>
            <person name="Yasuda T."/>
            <person name="Iwayanagi T."/>
            <person name="Wagatsuma M."/>
            <person name="Shiratori A."/>
            <person name="Sudo H."/>
            <person name="Hosoiri T."/>
            <person name="Kaku Y."/>
            <person name="Kodaira H."/>
            <person name="Kondo H."/>
            <person name="Sugawara M."/>
            <person name="Takahashi M."/>
            <person name="Kanda K."/>
            <person name="Yokoi T."/>
            <person name="Furuya T."/>
            <person name="Kikkawa E."/>
            <person name="Omura Y."/>
            <person name="Abe K."/>
            <person name="Kamihara K."/>
            <person name="Katsuta N."/>
            <person name="Sato K."/>
            <person name="Tanikawa M."/>
            <person name="Yamazaki M."/>
            <person name="Ninomiya K."/>
            <person name="Ishibashi T."/>
            <person name="Yamashita H."/>
            <person name="Murakawa K."/>
            <person name="Fujimori K."/>
            <person name="Tanai H."/>
            <person name="Kimata M."/>
            <person name="Watanabe M."/>
            <person name="Hiraoka S."/>
            <person name="Chiba Y."/>
            <person name="Ishida S."/>
            <person name="Ono Y."/>
            <person name="Takiguchi S."/>
            <person name="Watanabe S."/>
            <person name="Yosida M."/>
            <person name="Hotuta T."/>
            <person name="Kusano J."/>
            <person name="Kanehori K."/>
            <person name="Takahashi-Fujii A."/>
            <person name="Hara H."/>
            <person name="Tanase T.-O."/>
            <person name="Nomura Y."/>
            <person name="Togiya S."/>
            <person name="Komai F."/>
            <person name="Hara R."/>
            <person name="Takeuchi K."/>
            <person name="Arita M."/>
            <person name="Imose N."/>
            <person name="Musashino K."/>
            <person name="Yuuki H."/>
            <person name="Oshima A."/>
            <person name="Sasaki N."/>
            <person name="Aotsuka S."/>
            <person name="Yoshikawa Y."/>
            <person name="Matsunawa H."/>
            <person name="Ichihara T."/>
            <person name="Shiohata N."/>
            <person name="Sano S."/>
            <person name="Moriya S."/>
            <person name="Momiyama H."/>
            <person name="Satoh N."/>
            <person name="Takami S."/>
            <person name="Terashima Y."/>
            <person name="Suzuki O."/>
            <person name="Nakagawa S."/>
            <person name="Senoh A."/>
            <person name="Mizoguchi H."/>
            <person name="Goto Y."/>
            <person name="Shimizu F."/>
            <person name="Wakebe H."/>
            <person name="Hishigaki H."/>
            <person name="Watanabe T."/>
            <person name="Sugiyama A."/>
            <person name="Takemoto M."/>
            <person name="Kawakami B."/>
            <person name="Yamazaki M."/>
            <person name="Watanabe K."/>
            <person name="Kumagai A."/>
            <person name="Itakura S."/>
            <person name="Fukuzumi Y."/>
            <person name="Fujimori Y."/>
            <person name="Komiyama M."/>
            <person name="Tashiro H."/>
            <person name="Tanigami A."/>
            <person name="Fujiwara T."/>
            <person name="Ono T."/>
            <person name="Yamada K."/>
            <person name="Fujii Y."/>
            <person name="Ozaki K."/>
            <person name="Hirao M."/>
            <person name="Ohmori Y."/>
            <person name="Kawabata A."/>
            <person name="Hikiji T."/>
            <person name="Kobatake N."/>
            <person name="Inagaki H."/>
            <person name="Ikema Y."/>
            <person name="Okamoto S."/>
            <person name="Okitani R."/>
            <person name="Kawakami T."/>
            <person name="Noguchi S."/>
            <person name="Itoh T."/>
            <person name="Shigeta K."/>
            <person name="Senba T."/>
            <person name="Matsumura K."/>
            <person name="Nakajima Y."/>
            <person name="Mizuno T."/>
            <person name="Morinaga M."/>
            <person name="Sasaki M."/>
            <person name="Togashi T."/>
            <person name="Oyama M."/>
            <person name="Hata H."/>
            <person name="Watanabe M."/>
            <person name="Komatsu T."/>
            <person name="Mizushima-Sugano J."/>
            <person name="Satoh T."/>
            <person name="Shirai Y."/>
            <person name="Takahashi Y."/>
            <person name="Nakagawa K."/>
            <person name="Okumura K."/>
            <person name="Nagase T."/>
            <person name="Nomura N."/>
            <person name="Kikuchi H."/>
            <person name="Masuho Y."/>
            <person name="Yamashita R."/>
            <person name="Nakai K."/>
            <person name="Yada T."/>
            <person name="Nakamura Y."/>
            <person name="Ohara O."/>
            <person name="Isogai T."/>
            <person name="Sugano S."/>
        </authorList>
    </citation>
    <scope>NUCLEOTIDE SEQUENCE [LARGE SCALE MRNA]</scope>
    <source>
        <tissue>Thalamus</tissue>
    </source>
</reference>
<reference key="3">
    <citation type="submission" date="2005-09" db="EMBL/GenBank/DDBJ databases">
        <authorList>
            <person name="Mural R.J."/>
            <person name="Istrail S."/>
            <person name="Sutton G.G."/>
            <person name="Florea L."/>
            <person name="Halpern A.L."/>
            <person name="Mobarry C.M."/>
            <person name="Lippert R."/>
            <person name="Walenz B."/>
            <person name="Shatkay H."/>
            <person name="Dew I."/>
            <person name="Miller J.R."/>
            <person name="Flanigan M.J."/>
            <person name="Edwards N.J."/>
            <person name="Bolanos R."/>
            <person name="Fasulo D."/>
            <person name="Halldorsson B.V."/>
            <person name="Hannenhalli S."/>
            <person name="Turner R."/>
            <person name="Yooseph S."/>
            <person name="Lu F."/>
            <person name="Nusskern D.R."/>
            <person name="Shue B.C."/>
            <person name="Zheng X.H."/>
            <person name="Zhong F."/>
            <person name="Delcher A.L."/>
            <person name="Huson D.H."/>
            <person name="Kravitz S.A."/>
            <person name="Mouchard L."/>
            <person name="Reinert K."/>
            <person name="Remington K.A."/>
            <person name="Clark A.G."/>
            <person name="Waterman M.S."/>
            <person name="Eichler E.E."/>
            <person name="Adams M.D."/>
            <person name="Hunkapiller M.W."/>
            <person name="Myers E.W."/>
            <person name="Venter J.C."/>
        </authorList>
    </citation>
    <scope>NUCLEOTIDE SEQUENCE [LARGE SCALE GENOMIC DNA]</scope>
</reference>
<reference key="4">
    <citation type="journal article" date="2004" name="Genome Res.">
        <title>The status, quality, and expansion of the NIH full-length cDNA project: the Mammalian Gene Collection (MGC).</title>
        <authorList>
            <consortium name="The MGC Project Team"/>
        </authorList>
    </citation>
    <scope>NUCLEOTIDE SEQUENCE [LARGE SCALE MRNA]</scope>
    <source>
        <tissue>Testis</tissue>
    </source>
</reference>
<reference key="5">
    <citation type="journal article" date="2013" name="Cell. Mol. Life Sci.">
        <title>Novel activity of KRAB domain that functions to reinforce nuclear localization of KRAB-containing zinc finger proteins by interacting with KAP1.</title>
        <authorList>
            <person name="Wang W."/>
            <person name="Cai J."/>
            <person name="Wu Y."/>
            <person name="Hu L."/>
            <person name="Chen Z."/>
            <person name="Hu J."/>
            <person name="Chen Z."/>
            <person name="Li W."/>
            <person name="Guo M."/>
            <person name="Huang Z."/>
        </authorList>
    </citation>
    <scope>INTERACTION WITH ZNF268</scope>
    <scope>SUBCELLULAR LOCATION</scope>
</reference>